<gene>
    <name type="primary">ZFY</name>
</gene>
<accession>Q52V16</accession>
<organism>
    <name type="scientific">Gorilla gorilla gorilla</name>
    <name type="common">Western lowland gorilla</name>
    <dbReference type="NCBI Taxonomy" id="9595"/>
    <lineage>
        <taxon>Eukaryota</taxon>
        <taxon>Metazoa</taxon>
        <taxon>Chordata</taxon>
        <taxon>Craniata</taxon>
        <taxon>Vertebrata</taxon>
        <taxon>Euteleostomi</taxon>
        <taxon>Mammalia</taxon>
        <taxon>Eutheria</taxon>
        <taxon>Euarchontoglires</taxon>
        <taxon>Primates</taxon>
        <taxon>Haplorrhini</taxon>
        <taxon>Catarrhini</taxon>
        <taxon>Hominidae</taxon>
        <taxon>Gorilla</taxon>
    </lineage>
</organism>
<reference key="1">
    <citation type="journal article" date="2005" name="Mol. Biol. Evol.">
        <title>A genomic region evolving toward different GC contents in humans and chimpanzees indicates a recent and regionally limited shift in the mutation pattern.</title>
        <authorList>
            <person name="Ebersberger I."/>
            <person name="Meyer M."/>
        </authorList>
    </citation>
    <scope>NUCLEOTIDE SEQUENCE [GENOMIC DNA]</scope>
</reference>
<feature type="chain" id="PRO_0000232440" description="Zinc finger Y-chromosomal protein">
    <location>
        <begin position="1"/>
        <end position="801"/>
    </location>
</feature>
<feature type="zinc finger region" description="C2H2-type 1" evidence="3">
    <location>
        <begin position="421"/>
        <end position="443"/>
    </location>
</feature>
<feature type="zinc finger region" description="C2H2-type 2; atypical" evidence="3">
    <location>
        <begin position="452"/>
        <end position="474"/>
    </location>
</feature>
<feature type="zinc finger region" description="C2H2-type 3" evidence="3">
    <location>
        <begin position="484"/>
        <end position="506"/>
    </location>
</feature>
<feature type="zinc finger region" description="C2H2-type 4" evidence="3">
    <location>
        <begin position="515"/>
        <end position="538"/>
    </location>
</feature>
<feature type="zinc finger region" description="C2H2-type 5" evidence="3">
    <location>
        <begin position="544"/>
        <end position="566"/>
    </location>
</feature>
<feature type="zinc finger region" description="C2H2-type 6" evidence="3">
    <location>
        <begin position="572"/>
        <end position="595"/>
    </location>
</feature>
<feature type="zinc finger region" description="C2H2-type 7" evidence="3">
    <location>
        <begin position="601"/>
        <end position="623"/>
    </location>
</feature>
<feature type="zinc finger region" description="C2H2-type 8" evidence="3">
    <location>
        <begin position="629"/>
        <end position="652"/>
    </location>
</feature>
<feature type="zinc finger region" description="C2H2-type 9" evidence="3">
    <location>
        <begin position="658"/>
        <end position="680"/>
    </location>
</feature>
<feature type="zinc finger region" description="C2H2-type 10" evidence="3">
    <location>
        <begin position="686"/>
        <end position="709"/>
    </location>
</feature>
<feature type="zinc finger region" description="C2H2-type 11" evidence="3">
    <location>
        <begin position="715"/>
        <end position="737"/>
    </location>
</feature>
<feature type="zinc finger region" description="C2H2-type 12" evidence="3">
    <location>
        <begin position="743"/>
        <end position="766"/>
    </location>
</feature>
<feature type="zinc finger region" description="C2H2-type 13" evidence="3">
    <location>
        <begin position="772"/>
        <end position="795"/>
    </location>
</feature>
<feature type="modified residue" description="Phosphoserine" evidence="2">
    <location>
        <position position="270"/>
    </location>
</feature>
<keyword id="KW-0010">Activator</keyword>
<keyword id="KW-0238">DNA-binding</keyword>
<keyword id="KW-0479">Metal-binding</keyword>
<keyword id="KW-0539">Nucleus</keyword>
<keyword id="KW-0597">Phosphoprotein</keyword>
<keyword id="KW-1185">Reference proteome</keyword>
<keyword id="KW-0677">Repeat</keyword>
<keyword id="KW-0804">Transcription</keyword>
<keyword id="KW-0805">Transcription regulation</keyword>
<keyword id="KW-0862">Zinc</keyword>
<keyword id="KW-0863">Zinc-finger</keyword>
<sequence length="801" mass="90489">MDEDEFELQPQEPNSFFDGIGADATHMDGDQIVVEIQEAVFVSNIVDSDITVHNFVPDDPDSVVIQDVIEDVVIEEDVQCSDILEEADVSENVIIPEQVLESDVTEEVSLPHCTVPDDVLASDITSTSTSMPEHVLTSESMHVCDIGHVEHMVHDSVVEAEIITDPLTSDIVSEEVLVADCAPEAIIDASGISVDQQDNDKASCEDYLMISLDDAGKIEHDGSTGVTIDAESEMDPCKVDSTCPEVIKVYIFKADPGEDDLGGTVDIVESEPENDHGVELLDQNSSIRVPREKMVYMTVNDSQQEDEDLNVAEIADEVYMEVIVGEEDAAVAAAAAAVHEQQIDEDEMKTFVPIAWAAAYGNNSDGIENRNGTASALLHIDESAGLGRLAKQKPKKKRRPDSRQYQTAIIIGPDGHPLTVYPCMICGKKFKSRGFLKRHMKNHPEHLAKKKYHCTDCDYTTNKKISLHNHLESHKLTSKAEKAIECDECGKHFSHAGALFTHKMVHKEKGANKMHKCKFCEYETAEQGLLNRHLLAVHSKNFPHICVECGKGFRHPSELKKHMRIHTGEKPYQCQYCEYRSADSSNLKTHIKTKHSKEMPFKCDICLLTFSDTKEVQQHTLVHQESKTHQCLHCDHKSSNSSDLKRHVISVHTKDYPHKCEMCEKGFHRPSELKKHVAVHKGKKMHQCRHCDFKIADPFVLSRHILSVHTKDLPFRCKRCRKGFRQQNELKKHMKTHSGRKVYQCEYCEYSTTDASGFKRHVISIHTKDYPHRCEYCKKGFRRPSEKNQHIMRHHKEVGLP</sequence>
<comment type="function">
    <text evidence="1">Probable transcriptional activator. Binds to the consensus sequence 5'-AGGCCY-3' (By similarity).</text>
</comment>
<comment type="subcellular location">
    <subcellularLocation>
        <location>Nucleus</location>
    </subcellularLocation>
</comment>
<comment type="domain">
    <text evidence="1">The binding of ZFY to DNA is mediated by the interaction of the GGCC core base pairs with zinc fingers 12 and 13.</text>
</comment>
<comment type="similarity">
    <text evidence="4">Belongs to the krueppel C2H2-type zinc-finger protein family. ZFX/ZFY subfamily.</text>
</comment>
<evidence type="ECO:0000250" key="1"/>
<evidence type="ECO:0000250" key="2">
    <source>
        <dbReference type="UniProtKB" id="P17012"/>
    </source>
</evidence>
<evidence type="ECO:0000255" key="3">
    <source>
        <dbReference type="PROSITE-ProRule" id="PRU00042"/>
    </source>
</evidence>
<evidence type="ECO:0000305" key="4"/>
<protein>
    <recommendedName>
        <fullName>Zinc finger Y-chromosomal protein</fullName>
    </recommendedName>
</protein>
<name>ZFY_GORGO</name>
<dbReference type="EMBL" id="AY913765">
    <property type="protein sequence ID" value="AAX94761.1"/>
    <property type="molecule type" value="Genomic_DNA"/>
</dbReference>
<dbReference type="EMBL" id="AY913764">
    <property type="protein sequence ID" value="AAX94761.1"/>
    <property type="status" value="JOINED"/>
    <property type="molecule type" value="Genomic_DNA"/>
</dbReference>
<dbReference type="RefSeq" id="XP_055233216.1">
    <property type="nucleotide sequence ID" value="XM_055377241.1"/>
</dbReference>
<dbReference type="RefSeq" id="XP_055233217.1">
    <property type="nucleotide sequence ID" value="XM_055377242.2"/>
</dbReference>
<dbReference type="RefSeq" id="XP_063559430.1">
    <property type="nucleotide sequence ID" value="XM_063703360.1"/>
</dbReference>
<dbReference type="SMR" id="Q52V16"/>
<dbReference type="FunCoup" id="Q52V16">
    <property type="interactions" value="1332"/>
</dbReference>
<dbReference type="STRING" id="9593.ENSGGOP00000049771"/>
<dbReference type="GeneID" id="129530424"/>
<dbReference type="eggNOG" id="KOG1721">
    <property type="taxonomic scope" value="Eukaryota"/>
</dbReference>
<dbReference type="InParanoid" id="Q52V16"/>
<dbReference type="Proteomes" id="UP000001519">
    <property type="component" value="Unplaced"/>
</dbReference>
<dbReference type="GO" id="GO:0005634">
    <property type="term" value="C:nucleus"/>
    <property type="evidence" value="ECO:0000318"/>
    <property type="project" value="GO_Central"/>
</dbReference>
<dbReference type="GO" id="GO:0000981">
    <property type="term" value="F:DNA-binding transcription factor activity, RNA polymerase II-specific"/>
    <property type="evidence" value="ECO:0000318"/>
    <property type="project" value="GO_Central"/>
</dbReference>
<dbReference type="GO" id="GO:0000977">
    <property type="term" value="F:RNA polymerase II transcription regulatory region sequence-specific DNA binding"/>
    <property type="evidence" value="ECO:0000318"/>
    <property type="project" value="GO_Central"/>
</dbReference>
<dbReference type="GO" id="GO:0008270">
    <property type="term" value="F:zinc ion binding"/>
    <property type="evidence" value="ECO:0007669"/>
    <property type="project" value="UniProtKB-KW"/>
</dbReference>
<dbReference type="GO" id="GO:0006357">
    <property type="term" value="P:regulation of transcription by RNA polymerase II"/>
    <property type="evidence" value="ECO:0000318"/>
    <property type="project" value="GO_Central"/>
</dbReference>
<dbReference type="FunFam" id="3.30.160.60:FF:000054">
    <property type="entry name" value="Zinc finger protein 711"/>
    <property type="match status" value="1"/>
</dbReference>
<dbReference type="FunFam" id="3.30.160.60:FF:000209">
    <property type="entry name" value="Zinc finger protein 711"/>
    <property type="match status" value="3"/>
</dbReference>
<dbReference type="FunFam" id="3.30.160.60:FF:000170">
    <property type="entry name" value="Zinc finger protein 711 isoform X2"/>
    <property type="match status" value="1"/>
</dbReference>
<dbReference type="FunFam" id="3.30.160.60:FF:000607">
    <property type="entry name" value="zinc finger X-chromosomal protein-like isoform X1"/>
    <property type="match status" value="1"/>
</dbReference>
<dbReference type="FunFam" id="3.30.160.60:FF:000461">
    <property type="entry name" value="Zinc finger X-chromosomal protein-like protein"/>
    <property type="match status" value="1"/>
</dbReference>
<dbReference type="Gene3D" id="3.30.160.60">
    <property type="entry name" value="Classic Zinc Finger"/>
    <property type="match status" value="8"/>
</dbReference>
<dbReference type="InterPro" id="IPR006794">
    <property type="entry name" value="Transcrp_activ_Zfx/Zfy-dom"/>
</dbReference>
<dbReference type="InterPro" id="IPR036236">
    <property type="entry name" value="Znf_C2H2_sf"/>
</dbReference>
<dbReference type="InterPro" id="IPR013087">
    <property type="entry name" value="Znf_C2H2_type"/>
</dbReference>
<dbReference type="PANTHER" id="PTHR24381:SF393">
    <property type="entry name" value="CHROMATIN-LINKED ADAPTOR FOR MSL PROTEINS, ISOFORM B"/>
    <property type="match status" value="1"/>
</dbReference>
<dbReference type="PANTHER" id="PTHR24381">
    <property type="entry name" value="ZINC FINGER PROTEIN"/>
    <property type="match status" value="1"/>
</dbReference>
<dbReference type="Pfam" id="PF00096">
    <property type="entry name" value="zf-C2H2"/>
    <property type="match status" value="7"/>
</dbReference>
<dbReference type="Pfam" id="PF13909">
    <property type="entry name" value="zf-H2C2_5"/>
    <property type="match status" value="1"/>
</dbReference>
<dbReference type="Pfam" id="PF04704">
    <property type="entry name" value="Zfx_Zfy_act"/>
    <property type="match status" value="1"/>
</dbReference>
<dbReference type="SMART" id="SM00355">
    <property type="entry name" value="ZnF_C2H2"/>
    <property type="match status" value="13"/>
</dbReference>
<dbReference type="SUPFAM" id="SSF57667">
    <property type="entry name" value="beta-beta-alpha zinc fingers"/>
    <property type="match status" value="7"/>
</dbReference>
<dbReference type="PROSITE" id="PS00028">
    <property type="entry name" value="ZINC_FINGER_C2H2_1"/>
    <property type="match status" value="8"/>
</dbReference>
<dbReference type="PROSITE" id="PS50157">
    <property type="entry name" value="ZINC_FINGER_C2H2_2"/>
    <property type="match status" value="12"/>
</dbReference>
<proteinExistence type="inferred from homology"/>